<feature type="chain" id="PRO_1000059206" description="Nucleoid-associated protein Spro_1136">
    <location>
        <begin position="1"/>
        <end position="109"/>
    </location>
</feature>
<feature type="region of interest" description="Disordered" evidence="2">
    <location>
        <begin position="1"/>
        <end position="21"/>
    </location>
</feature>
<feature type="region of interest" description="Disordered" evidence="2">
    <location>
        <begin position="90"/>
        <end position="109"/>
    </location>
</feature>
<feature type="compositionally biased region" description="Low complexity" evidence="2">
    <location>
        <begin position="11"/>
        <end position="21"/>
    </location>
</feature>
<accession>A8GAV0</accession>
<name>Y1136_SERP5</name>
<protein>
    <recommendedName>
        <fullName evidence="1">Nucleoid-associated protein Spro_1136</fullName>
    </recommendedName>
</protein>
<keyword id="KW-0963">Cytoplasm</keyword>
<keyword id="KW-0238">DNA-binding</keyword>
<organism>
    <name type="scientific">Serratia proteamaculans (strain 568)</name>
    <dbReference type="NCBI Taxonomy" id="399741"/>
    <lineage>
        <taxon>Bacteria</taxon>
        <taxon>Pseudomonadati</taxon>
        <taxon>Pseudomonadota</taxon>
        <taxon>Gammaproteobacteria</taxon>
        <taxon>Enterobacterales</taxon>
        <taxon>Yersiniaceae</taxon>
        <taxon>Serratia</taxon>
    </lineage>
</organism>
<evidence type="ECO:0000255" key="1">
    <source>
        <dbReference type="HAMAP-Rule" id="MF_00274"/>
    </source>
</evidence>
<evidence type="ECO:0000256" key="2">
    <source>
        <dbReference type="SAM" id="MobiDB-lite"/>
    </source>
</evidence>
<gene>
    <name type="ordered locus">Spro_1136</name>
</gene>
<sequence length="109" mass="11998">MFGKGGLGNLMKQAQQMQEKMQQMQEEVAKLEVTGESGAGLVKVTINGAHNCRRVEIDPSLMEDDKDMLEDLIAAAINDAARRIDETQKEKMASVSNGMQLPPGFKMPF</sequence>
<dbReference type="EMBL" id="CP000826">
    <property type="protein sequence ID" value="ABV40240.1"/>
    <property type="molecule type" value="Genomic_DNA"/>
</dbReference>
<dbReference type="SMR" id="A8GAV0"/>
<dbReference type="STRING" id="399741.Spro_1136"/>
<dbReference type="KEGG" id="spe:Spro_1136"/>
<dbReference type="eggNOG" id="COG0718">
    <property type="taxonomic scope" value="Bacteria"/>
</dbReference>
<dbReference type="HOGENOM" id="CLU_140930_0_0_6"/>
<dbReference type="OrthoDB" id="9808738at2"/>
<dbReference type="GO" id="GO:0043590">
    <property type="term" value="C:bacterial nucleoid"/>
    <property type="evidence" value="ECO:0007669"/>
    <property type="project" value="UniProtKB-UniRule"/>
</dbReference>
<dbReference type="GO" id="GO:0005829">
    <property type="term" value="C:cytosol"/>
    <property type="evidence" value="ECO:0007669"/>
    <property type="project" value="TreeGrafter"/>
</dbReference>
<dbReference type="GO" id="GO:0003677">
    <property type="term" value="F:DNA binding"/>
    <property type="evidence" value="ECO:0007669"/>
    <property type="project" value="UniProtKB-UniRule"/>
</dbReference>
<dbReference type="FunFam" id="3.30.1310.10:FF:000001">
    <property type="entry name" value="Nucleoid-associated protein YbaB"/>
    <property type="match status" value="1"/>
</dbReference>
<dbReference type="Gene3D" id="3.30.1310.10">
    <property type="entry name" value="Nucleoid-associated protein YbaB-like domain"/>
    <property type="match status" value="1"/>
</dbReference>
<dbReference type="HAMAP" id="MF_00274">
    <property type="entry name" value="DNA_YbaB_EbfC"/>
    <property type="match status" value="1"/>
</dbReference>
<dbReference type="InterPro" id="IPR036894">
    <property type="entry name" value="YbaB-like_sf"/>
</dbReference>
<dbReference type="InterPro" id="IPR004401">
    <property type="entry name" value="YbaB/EbfC"/>
</dbReference>
<dbReference type="NCBIfam" id="TIGR00103">
    <property type="entry name" value="DNA_YbaB_EbfC"/>
    <property type="match status" value="1"/>
</dbReference>
<dbReference type="PANTHER" id="PTHR33449">
    <property type="entry name" value="NUCLEOID-ASSOCIATED PROTEIN YBAB"/>
    <property type="match status" value="1"/>
</dbReference>
<dbReference type="PANTHER" id="PTHR33449:SF1">
    <property type="entry name" value="NUCLEOID-ASSOCIATED PROTEIN YBAB"/>
    <property type="match status" value="1"/>
</dbReference>
<dbReference type="Pfam" id="PF02575">
    <property type="entry name" value="YbaB_DNA_bd"/>
    <property type="match status" value="1"/>
</dbReference>
<dbReference type="PIRSF" id="PIRSF004555">
    <property type="entry name" value="UCP004555"/>
    <property type="match status" value="1"/>
</dbReference>
<dbReference type="SUPFAM" id="SSF82607">
    <property type="entry name" value="YbaB-like"/>
    <property type="match status" value="1"/>
</dbReference>
<reference key="1">
    <citation type="submission" date="2007-09" db="EMBL/GenBank/DDBJ databases">
        <title>Complete sequence of chromosome of Serratia proteamaculans 568.</title>
        <authorList>
            <consortium name="US DOE Joint Genome Institute"/>
            <person name="Copeland A."/>
            <person name="Lucas S."/>
            <person name="Lapidus A."/>
            <person name="Barry K."/>
            <person name="Glavina del Rio T."/>
            <person name="Dalin E."/>
            <person name="Tice H."/>
            <person name="Pitluck S."/>
            <person name="Chain P."/>
            <person name="Malfatti S."/>
            <person name="Shin M."/>
            <person name="Vergez L."/>
            <person name="Schmutz J."/>
            <person name="Larimer F."/>
            <person name="Land M."/>
            <person name="Hauser L."/>
            <person name="Kyrpides N."/>
            <person name="Kim E."/>
            <person name="Taghavi S."/>
            <person name="Newman L."/>
            <person name="Vangronsveld J."/>
            <person name="van der Lelie D."/>
            <person name="Richardson P."/>
        </authorList>
    </citation>
    <scope>NUCLEOTIDE SEQUENCE [LARGE SCALE GENOMIC DNA]</scope>
    <source>
        <strain>568</strain>
    </source>
</reference>
<proteinExistence type="inferred from homology"/>
<comment type="function">
    <text evidence="1">Binds to DNA and alters its conformation. May be involved in regulation of gene expression, nucleoid organization and DNA protection.</text>
</comment>
<comment type="subunit">
    <text evidence="1">Homodimer.</text>
</comment>
<comment type="subcellular location">
    <subcellularLocation>
        <location evidence="1">Cytoplasm</location>
        <location evidence="1">Nucleoid</location>
    </subcellularLocation>
</comment>
<comment type="similarity">
    <text evidence="1">Belongs to the YbaB/EbfC family.</text>
</comment>